<keyword id="KW-0678">Repressor</keyword>
<keyword id="KW-0346">Stress response</keyword>
<keyword id="KW-0804">Transcription</keyword>
<keyword id="KW-0805">Transcription regulation</keyword>
<proteinExistence type="inferred from homology"/>
<comment type="function">
    <text evidence="1">Negative regulator of class I heat shock genes (grpE-dnaK-dnaJ and groELS operons). Prevents heat-shock induction of these operons.</text>
</comment>
<comment type="similarity">
    <text evidence="1">Belongs to the HrcA family.</text>
</comment>
<reference key="1">
    <citation type="submission" date="2007-05" db="EMBL/GenBank/DDBJ databases">
        <title>Complete sequence of Thermotoga petrophila RKU-1.</title>
        <authorList>
            <consortium name="US DOE Joint Genome Institute"/>
            <person name="Copeland A."/>
            <person name="Lucas S."/>
            <person name="Lapidus A."/>
            <person name="Barry K."/>
            <person name="Glavina del Rio T."/>
            <person name="Dalin E."/>
            <person name="Tice H."/>
            <person name="Pitluck S."/>
            <person name="Sims D."/>
            <person name="Brettin T."/>
            <person name="Bruce D."/>
            <person name="Detter J.C."/>
            <person name="Han C."/>
            <person name="Tapia R."/>
            <person name="Schmutz J."/>
            <person name="Larimer F."/>
            <person name="Land M."/>
            <person name="Hauser L."/>
            <person name="Kyrpides N."/>
            <person name="Mikhailova N."/>
            <person name="Nelson K."/>
            <person name="Gogarten J.P."/>
            <person name="Noll K."/>
            <person name="Richardson P."/>
        </authorList>
    </citation>
    <scope>NUCLEOTIDE SEQUENCE [LARGE SCALE GENOMIC DNA]</scope>
    <source>
        <strain>ATCC BAA-488 / DSM 13995 / JCM 10881 / RKU-1</strain>
    </source>
</reference>
<name>HRCA_THEP1</name>
<dbReference type="EMBL" id="CP000702">
    <property type="protein sequence ID" value="ABQ46105.1"/>
    <property type="molecule type" value="Genomic_DNA"/>
</dbReference>
<dbReference type="RefSeq" id="WP_011942779.1">
    <property type="nucleotide sequence ID" value="NC_009486.1"/>
</dbReference>
<dbReference type="SMR" id="A5IIT2"/>
<dbReference type="STRING" id="390874.Tpet_0076"/>
<dbReference type="KEGG" id="tpt:Tpet_0076"/>
<dbReference type="eggNOG" id="COG1420">
    <property type="taxonomic scope" value="Bacteria"/>
</dbReference>
<dbReference type="HOGENOM" id="CLU_050019_1_0_0"/>
<dbReference type="Proteomes" id="UP000006558">
    <property type="component" value="Chromosome"/>
</dbReference>
<dbReference type="GO" id="GO:0003677">
    <property type="term" value="F:DNA binding"/>
    <property type="evidence" value="ECO:0007669"/>
    <property type="project" value="InterPro"/>
</dbReference>
<dbReference type="GO" id="GO:0045892">
    <property type="term" value="P:negative regulation of DNA-templated transcription"/>
    <property type="evidence" value="ECO:0007669"/>
    <property type="project" value="UniProtKB-UniRule"/>
</dbReference>
<dbReference type="Gene3D" id="3.30.450.40">
    <property type="match status" value="1"/>
</dbReference>
<dbReference type="Gene3D" id="3.30.390.60">
    <property type="entry name" value="Heat-inducible transcription repressor hrca homolog, domain 3"/>
    <property type="match status" value="1"/>
</dbReference>
<dbReference type="Gene3D" id="1.10.10.10">
    <property type="entry name" value="Winged helix-like DNA-binding domain superfamily/Winged helix DNA-binding domain"/>
    <property type="match status" value="1"/>
</dbReference>
<dbReference type="HAMAP" id="MF_00081">
    <property type="entry name" value="HrcA"/>
    <property type="match status" value="1"/>
</dbReference>
<dbReference type="InterPro" id="IPR029016">
    <property type="entry name" value="GAF-like_dom_sf"/>
</dbReference>
<dbReference type="InterPro" id="IPR002571">
    <property type="entry name" value="HrcA"/>
</dbReference>
<dbReference type="InterPro" id="IPR021153">
    <property type="entry name" value="HrcA_C"/>
</dbReference>
<dbReference type="InterPro" id="IPR036388">
    <property type="entry name" value="WH-like_DNA-bd_sf"/>
</dbReference>
<dbReference type="InterPro" id="IPR036390">
    <property type="entry name" value="WH_DNA-bd_sf"/>
</dbReference>
<dbReference type="InterPro" id="IPR023120">
    <property type="entry name" value="WHTH_transcript_rep_HrcA_IDD"/>
</dbReference>
<dbReference type="NCBIfam" id="TIGR00331">
    <property type="entry name" value="hrcA"/>
    <property type="match status" value="1"/>
</dbReference>
<dbReference type="PANTHER" id="PTHR34824">
    <property type="entry name" value="HEAT-INDUCIBLE TRANSCRIPTION REPRESSOR HRCA"/>
    <property type="match status" value="1"/>
</dbReference>
<dbReference type="PANTHER" id="PTHR34824:SF1">
    <property type="entry name" value="HEAT-INDUCIBLE TRANSCRIPTION REPRESSOR HRCA"/>
    <property type="match status" value="1"/>
</dbReference>
<dbReference type="Pfam" id="PF01628">
    <property type="entry name" value="HrcA"/>
    <property type="match status" value="1"/>
</dbReference>
<dbReference type="PIRSF" id="PIRSF005485">
    <property type="entry name" value="HrcA"/>
    <property type="match status" value="1"/>
</dbReference>
<dbReference type="SUPFAM" id="SSF55781">
    <property type="entry name" value="GAF domain-like"/>
    <property type="match status" value="1"/>
</dbReference>
<dbReference type="SUPFAM" id="SSF46785">
    <property type="entry name" value="Winged helix' DNA-binding domain"/>
    <property type="match status" value="1"/>
</dbReference>
<feature type="chain" id="PRO_1000010476" description="Heat-inducible transcription repressor HrcA">
    <location>
        <begin position="1"/>
        <end position="338"/>
    </location>
</feature>
<evidence type="ECO:0000255" key="1">
    <source>
        <dbReference type="HAMAP-Rule" id="MF_00081"/>
    </source>
</evidence>
<gene>
    <name evidence="1" type="primary">hrcA</name>
    <name type="ordered locus">Tpet_0076</name>
</gene>
<protein>
    <recommendedName>
        <fullName evidence="1">Heat-inducible transcription repressor HrcA</fullName>
    </recommendedName>
</protein>
<organism>
    <name type="scientific">Thermotoga petrophila (strain ATCC BAA-488 / DSM 13995 / JCM 10881 / RKU-1)</name>
    <dbReference type="NCBI Taxonomy" id="390874"/>
    <lineage>
        <taxon>Bacteria</taxon>
        <taxon>Thermotogati</taxon>
        <taxon>Thermotogota</taxon>
        <taxon>Thermotogae</taxon>
        <taxon>Thermotogales</taxon>
        <taxon>Thermotogaceae</taxon>
        <taxon>Thermotoga</taxon>
    </lineage>
</organism>
<accession>A5IIT2</accession>
<sequence length="338" mass="39284">MRRLNRKNSDASKKLNDRQRKVLYCIVREYIENKKPVSSQRVLEVSNIEFSSATIRNDMKKLEYLGYIYQPHTSAGRIPTDKGLRFYYEEMLKISKETSEADLAVETFKSMPLADPEKVLFLAGNLLARLTEGYVLIERPNTRDLKILRVMLIPVSEDYLIFSILTEFGVSRVTPIKTQERLNWEEIERQLNFLLRGKTIGEVLLGRIESLKGSGFLRLIESLIGETIERYLDAGLENLLKDETLALEDIRNLLEEIKDQKFLESLVGEGISVMIGREIGRKNLEKFAVFSGRYFKGESPIGSVYFFTSKVTRYDRNHKIFEYILNRLSEYFTSTSRR</sequence>